<reference key="1">
    <citation type="journal article" date="2003" name="Proc. Natl. Acad. Sci. U.S.A.">
        <title>The complete genome sequence of Chromobacterium violaceum reveals remarkable and exploitable bacterial adaptability.</title>
        <authorList>
            <person name="Vasconcelos A.T.R."/>
            <person name="de Almeida D.F."/>
            <person name="Hungria M."/>
            <person name="Guimaraes C.T."/>
            <person name="Antonio R.V."/>
            <person name="Almeida F.C."/>
            <person name="de Almeida L.G.P."/>
            <person name="de Almeida R."/>
            <person name="Alves-Gomes J.A."/>
            <person name="Andrade E.M."/>
            <person name="Araripe J."/>
            <person name="de Araujo M.F.F."/>
            <person name="Astolfi-Filho S."/>
            <person name="Azevedo V."/>
            <person name="Baptista A.J."/>
            <person name="Bataus L.A.M."/>
            <person name="Batista J.S."/>
            <person name="Belo A."/>
            <person name="van den Berg C."/>
            <person name="Bogo M."/>
            <person name="Bonatto S."/>
            <person name="Bordignon J."/>
            <person name="Brigido M.M."/>
            <person name="Brito C.A."/>
            <person name="Brocchi M."/>
            <person name="Burity H.A."/>
            <person name="Camargo A.A."/>
            <person name="Cardoso D.D.P."/>
            <person name="Carneiro N.P."/>
            <person name="Carraro D.M."/>
            <person name="Carvalho C.M.B."/>
            <person name="Cascardo J.C.M."/>
            <person name="Cavada B.S."/>
            <person name="Chueire L.M.O."/>
            <person name="Creczynski-Pasa T.B."/>
            <person name="Cunha-Junior N.C."/>
            <person name="Fagundes N."/>
            <person name="Falcao C.L."/>
            <person name="Fantinatti F."/>
            <person name="Farias I.P."/>
            <person name="Felipe M.S.S."/>
            <person name="Ferrari L.P."/>
            <person name="Ferro J.A."/>
            <person name="Ferro M.I.T."/>
            <person name="Franco G.R."/>
            <person name="Freitas N.S.A."/>
            <person name="Furlan L.R."/>
            <person name="Gazzinelli R.T."/>
            <person name="Gomes E.A."/>
            <person name="Goncalves P.R."/>
            <person name="Grangeiro T.B."/>
            <person name="Grattapaglia D."/>
            <person name="Grisard E.C."/>
            <person name="Hanna E.S."/>
            <person name="Jardim S.N."/>
            <person name="Laurino J."/>
            <person name="Leoi L.C.T."/>
            <person name="Lima L.F.A."/>
            <person name="Loureiro M.F."/>
            <person name="Lyra M.C.C.P."/>
            <person name="Madeira H.M.F."/>
            <person name="Manfio G.P."/>
            <person name="Maranhao A.Q."/>
            <person name="Martins W.S."/>
            <person name="di Mauro S.M.Z."/>
            <person name="de Medeiros S.R.B."/>
            <person name="Meissner R.V."/>
            <person name="Moreira M.A.M."/>
            <person name="Nascimento F.F."/>
            <person name="Nicolas M.F."/>
            <person name="Oliveira J.G."/>
            <person name="Oliveira S.C."/>
            <person name="Paixao R.F.C."/>
            <person name="Parente J.A."/>
            <person name="Pedrosa F.O."/>
            <person name="Pena S.D.J."/>
            <person name="Pereira J.O."/>
            <person name="Pereira M."/>
            <person name="Pinto L.S.R.C."/>
            <person name="Pinto L.S."/>
            <person name="Porto J.I.R."/>
            <person name="Potrich D.P."/>
            <person name="Ramalho-Neto C.E."/>
            <person name="Reis A.M.M."/>
            <person name="Rigo L.U."/>
            <person name="Rondinelli E."/>
            <person name="Santos E.B.P."/>
            <person name="Santos F.R."/>
            <person name="Schneider M.P.C."/>
            <person name="Seuanez H.N."/>
            <person name="Silva A.M.R."/>
            <person name="da Silva A.L.C."/>
            <person name="Silva D.W."/>
            <person name="Silva R."/>
            <person name="Simoes I.C."/>
            <person name="Simon D."/>
            <person name="Soares C.M.A."/>
            <person name="Soares R.B.A."/>
            <person name="Souza E.M."/>
            <person name="Souza K.R.L."/>
            <person name="Souza R.C."/>
            <person name="Steffens M.B.R."/>
            <person name="Steindel M."/>
            <person name="Teixeira S.R."/>
            <person name="Urmenyi T."/>
            <person name="Vettore A."/>
            <person name="Wassem R."/>
            <person name="Zaha A."/>
            <person name="Simpson A.J.G."/>
        </authorList>
    </citation>
    <scope>NUCLEOTIDE SEQUENCE [LARGE SCALE GENOMIC DNA]</scope>
    <source>
        <strain>ATCC 12472 / DSM 30191 / JCM 1249 / CCUG 213 / NBRC 12614 / NCIMB 9131 / NCTC 9757 / MK</strain>
    </source>
</reference>
<protein>
    <recommendedName>
        <fullName evidence="1">Phosphoglucosamine mutase</fullName>
        <ecNumber evidence="1">5.4.2.10</ecNumber>
    </recommendedName>
</protein>
<name>GLMM_CHRVO</name>
<dbReference type="EC" id="5.4.2.10" evidence="1"/>
<dbReference type="EMBL" id="AE016825">
    <property type="protein sequence ID" value="AAQ61457.1"/>
    <property type="molecule type" value="Genomic_DNA"/>
</dbReference>
<dbReference type="RefSeq" id="WP_011137342.1">
    <property type="nucleotide sequence ID" value="NC_005085.1"/>
</dbReference>
<dbReference type="SMR" id="Q7NRI6"/>
<dbReference type="STRING" id="243365.CV_3795"/>
<dbReference type="KEGG" id="cvi:CV_3795"/>
<dbReference type="eggNOG" id="COG1109">
    <property type="taxonomic scope" value="Bacteria"/>
</dbReference>
<dbReference type="HOGENOM" id="CLU_016950_7_0_4"/>
<dbReference type="OrthoDB" id="9803322at2"/>
<dbReference type="Proteomes" id="UP000001424">
    <property type="component" value="Chromosome"/>
</dbReference>
<dbReference type="GO" id="GO:0005829">
    <property type="term" value="C:cytosol"/>
    <property type="evidence" value="ECO:0007669"/>
    <property type="project" value="TreeGrafter"/>
</dbReference>
<dbReference type="GO" id="GO:0000287">
    <property type="term" value="F:magnesium ion binding"/>
    <property type="evidence" value="ECO:0007669"/>
    <property type="project" value="UniProtKB-UniRule"/>
</dbReference>
<dbReference type="GO" id="GO:0008966">
    <property type="term" value="F:phosphoglucosamine mutase activity"/>
    <property type="evidence" value="ECO:0007669"/>
    <property type="project" value="UniProtKB-UniRule"/>
</dbReference>
<dbReference type="GO" id="GO:0004615">
    <property type="term" value="F:phosphomannomutase activity"/>
    <property type="evidence" value="ECO:0007669"/>
    <property type="project" value="TreeGrafter"/>
</dbReference>
<dbReference type="GO" id="GO:0005975">
    <property type="term" value="P:carbohydrate metabolic process"/>
    <property type="evidence" value="ECO:0007669"/>
    <property type="project" value="InterPro"/>
</dbReference>
<dbReference type="GO" id="GO:0009252">
    <property type="term" value="P:peptidoglycan biosynthetic process"/>
    <property type="evidence" value="ECO:0007669"/>
    <property type="project" value="TreeGrafter"/>
</dbReference>
<dbReference type="GO" id="GO:0006048">
    <property type="term" value="P:UDP-N-acetylglucosamine biosynthetic process"/>
    <property type="evidence" value="ECO:0007669"/>
    <property type="project" value="TreeGrafter"/>
</dbReference>
<dbReference type="CDD" id="cd05802">
    <property type="entry name" value="GlmM"/>
    <property type="match status" value="1"/>
</dbReference>
<dbReference type="FunFam" id="3.30.310.50:FF:000001">
    <property type="entry name" value="Phosphoglucosamine mutase"/>
    <property type="match status" value="1"/>
</dbReference>
<dbReference type="FunFam" id="3.40.120.10:FF:000001">
    <property type="entry name" value="Phosphoglucosamine mutase"/>
    <property type="match status" value="1"/>
</dbReference>
<dbReference type="FunFam" id="3.40.120.10:FF:000003">
    <property type="entry name" value="Phosphoglucosamine mutase"/>
    <property type="match status" value="1"/>
</dbReference>
<dbReference type="Gene3D" id="3.40.120.10">
    <property type="entry name" value="Alpha-D-Glucose-1,6-Bisphosphate, subunit A, domain 3"/>
    <property type="match status" value="3"/>
</dbReference>
<dbReference type="Gene3D" id="3.30.310.50">
    <property type="entry name" value="Alpha-D-phosphohexomutase, C-terminal domain"/>
    <property type="match status" value="1"/>
</dbReference>
<dbReference type="HAMAP" id="MF_01554_B">
    <property type="entry name" value="GlmM_B"/>
    <property type="match status" value="1"/>
</dbReference>
<dbReference type="InterPro" id="IPR005844">
    <property type="entry name" value="A-D-PHexomutase_a/b/a-I"/>
</dbReference>
<dbReference type="InterPro" id="IPR016055">
    <property type="entry name" value="A-D-PHexomutase_a/b/a-I/II/III"/>
</dbReference>
<dbReference type="InterPro" id="IPR005845">
    <property type="entry name" value="A-D-PHexomutase_a/b/a-II"/>
</dbReference>
<dbReference type="InterPro" id="IPR005846">
    <property type="entry name" value="A-D-PHexomutase_a/b/a-III"/>
</dbReference>
<dbReference type="InterPro" id="IPR005843">
    <property type="entry name" value="A-D-PHexomutase_C"/>
</dbReference>
<dbReference type="InterPro" id="IPR036900">
    <property type="entry name" value="A-D-PHexomutase_C_sf"/>
</dbReference>
<dbReference type="InterPro" id="IPR016066">
    <property type="entry name" value="A-D-PHexomutase_CS"/>
</dbReference>
<dbReference type="InterPro" id="IPR005841">
    <property type="entry name" value="Alpha-D-phosphohexomutase_SF"/>
</dbReference>
<dbReference type="InterPro" id="IPR006352">
    <property type="entry name" value="GlmM_bact"/>
</dbReference>
<dbReference type="InterPro" id="IPR050060">
    <property type="entry name" value="Phosphoglucosamine_mutase"/>
</dbReference>
<dbReference type="NCBIfam" id="TIGR01455">
    <property type="entry name" value="glmM"/>
    <property type="match status" value="1"/>
</dbReference>
<dbReference type="NCBIfam" id="NF008139">
    <property type="entry name" value="PRK10887.1"/>
    <property type="match status" value="1"/>
</dbReference>
<dbReference type="PANTHER" id="PTHR42946:SF1">
    <property type="entry name" value="PHOSPHOGLUCOMUTASE (ALPHA-D-GLUCOSE-1,6-BISPHOSPHATE-DEPENDENT)"/>
    <property type="match status" value="1"/>
</dbReference>
<dbReference type="PANTHER" id="PTHR42946">
    <property type="entry name" value="PHOSPHOHEXOSE MUTASE"/>
    <property type="match status" value="1"/>
</dbReference>
<dbReference type="Pfam" id="PF02878">
    <property type="entry name" value="PGM_PMM_I"/>
    <property type="match status" value="1"/>
</dbReference>
<dbReference type="Pfam" id="PF02879">
    <property type="entry name" value="PGM_PMM_II"/>
    <property type="match status" value="1"/>
</dbReference>
<dbReference type="Pfam" id="PF02880">
    <property type="entry name" value="PGM_PMM_III"/>
    <property type="match status" value="1"/>
</dbReference>
<dbReference type="Pfam" id="PF00408">
    <property type="entry name" value="PGM_PMM_IV"/>
    <property type="match status" value="1"/>
</dbReference>
<dbReference type="PRINTS" id="PR00509">
    <property type="entry name" value="PGMPMM"/>
</dbReference>
<dbReference type="SUPFAM" id="SSF55957">
    <property type="entry name" value="Phosphoglucomutase, C-terminal domain"/>
    <property type="match status" value="1"/>
</dbReference>
<dbReference type="SUPFAM" id="SSF53738">
    <property type="entry name" value="Phosphoglucomutase, first 3 domains"/>
    <property type="match status" value="3"/>
</dbReference>
<dbReference type="PROSITE" id="PS00710">
    <property type="entry name" value="PGM_PMM"/>
    <property type="match status" value="1"/>
</dbReference>
<accession>Q7NRI6</accession>
<organism>
    <name type="scientific">Chromobacterium violaceum (strain ATCC 12472 / DSM 30191 / JCM 1249 / CCUG 213 / NBRC 12614 / NCIMB 9131 / NCTC 9757 / MK)</name>
    <dbReference type="NCBI Taxonomy" id="243365"/>
    <lineage>
        <taxon>Bacteria</taxon>
        <taxon>Pseudomonadati</taxon>
        <taxon>Pseudomonadota</taxon>
        <taxon>Betaproteobacteria</taxon>
        <taxon>Neisseriales</taxon>
        <taxon>Chromobacteriaceae</taxon>
        <taxon>Chromobacterium</taxon>
    </lineage>
</organism>
<gene>
    <name evidence="1" type="primary">glmM</name>
    <name type="ordered locus">CV_3795</name>
</gene>
<keyword id="KW-0413">Isomerase</keyword>
<keyword id="KW-0460">Magnesium</keyword>
<keyword id="KW-0479">Metal-binding</keyword>
<keyword id="KW-0597">Phosphoprotein</keyword>
<keyword id="KW-1185">Reference proteome</keyword>
<evidence type="ECO:0000255" key="1">
    <source>
        <dbReference type="HAMAP-Rule" id="MF_01554"/>
    </source>
</evidence>
<proteinExistence type="inferred from homology"/>
<sequence>MSRKYFGTDGVRGEVGKFPITPEFVMKLGYAAGRVLVNHDQDSRPTVLIGKDTRISGYMLEAALQAGFTAAGVNVLLTGPLPTPGIAYLTRALRLEAGVVISASHNPFQDNGIKFFAEGGNKLDDALELEIEAMLDQPMATNPSLELGRARRIDGAAERYIEFCKSTFPNELSLKGLKLVVDCANGATYHIAPKVFHELGAELVEIGCEPNGYNINDKVGATYPKTLQMAVLEHQADFGIALDGDGDRLIMVDAAGRVYDGDQLIYVIAKARAARGELKGGVVGTVMTNMAMELALQKQGVPFGRAKVGDRYVLEMLHADGWQVGGEASGHILCLDKHSTGDGIISSLQVLASLKQLGLSLAEICADWRPFPQTLINVRHNGCDWKAASAAPLAEAEAALQGRGRVVLRPSGTEPVVRVMVEADDKALADTWAKAIAAAIEKVSA</sequence>
<feature type="chain" id="PRO_0000147872" description="Phosphoglucosamine mutase">
    <location>
        <begin position="1"/>
        <end position="445"/>
    </location>
</feature>
<feature type="active site" description="Phosphoserine intermediate" evidence="1">
    <location>
        <position position="104"/>
    </location>
</feature>
<feature type="binding site" description="via phosphate group" evidence="1">
    <location>
        <position position="104"/>
    </location>
    <ligand>
        <name>Mg(2+)</name>
        <dbReference type="ChEBI" id="CHEBI:18420"/>
    </ligand>
</feature>
<feature type="binding site" evidence="1">
    <location>
        <position position="243"/>
    </location>
    <ligand>
        <name>Mg(2+)</name>
        <dbReference type="ChEBI" id="CHEBI:18420"/>
    </ligand>
</feature>
<feature type="binding site" evidence="1">
    <location>
        <position position="245"/>
    </location>
    <ligand>
        <name>Mg(2+)</name>
        <dbReference type="ChEBI" id="CHEBI:18420"/>
    </ligand>
</feature>
<feature type="binding site" evidence="1">
    <location>
        <position position="247"/>
    </location>
    <ligand>
        <name>Mg(2+)</name>
        <dbReference type="ChEBI" id="CHEBI:18420"/>
    </ligand>
</feature>
<feature type="modified residue" description="Phosphoserine" evidence="1">
    <location>
        <position position="104"/>
    </location>
</feature>
<comment type="function">
    <text evidence="1">Catalyzes the conversion of glucosamine-6-phosphate to glucosamine-1-phosphate.</text>
</comment>
<comment type="catalytic activity">
    <reaction evidence="1">
        <text>alpha-D-glucosamine 1-phosphate = D-glucosamine 6-phosphate</text>
        <dbReference type="Rhea" id="RHEA:23424"/>
        <dbReference type="ChEBI" id="CHEBI:58516"/>
        <dbReference type="ChEBI" id="CHEBI:58725"/>
        <dbReference type="EC" id="5.4.2.10"/>
    </reaction>
</comment>
<comment type="cofactor">
    <cofactor evidence="1">
        <name>Mg(2+)</name>
        <dbReference type="ChEBI" id="CHEBI:18420"/>
    </cofactor>
    <text evidence="1">Binds 1 Mg(2+) ion per subunit.</text>
</comment>
<comment type="PTM">
    <text evidence="1">Activated by phosphorylation.</text>
</comment>
<comment type="similarity">
    <text evidence="1">Belongs to the phosphohexose mutase family.</text>
</comment>